<keyword id="KW-0227">DNA damage</keyword>
<keyword id="KW-0233">DNA recombination</keyword>
<keyword id="KW-0234">DNA repair</keyword>
<keyword id="KW-1185">Reference proteome</keyword>
<proteinExistence type="inferred from homology"/>
<accession>Q31PK5</accession>
<dbReference type="EMBL" id="CP000100">
    <property type="protein sequence ID" value="ABB57014.1"/>
    <property type="molecule type" value="Genomic_DNA"/>
</dbReference>
<dbReference type="RefSeq" id="WP_011242872.1">
    <property type="nucleotide sequence ID" value="NZ_JACJTX010000003.1"/>
</dbReference>
<dbReference type="SMR" id="Q31PK5"/>
<dbReference type="STRING" id="1140.Synpcc7942_0984"/>
<dbReference type="PaxDb" id="1140-Synpcc7942_0984"/>
<dbReference type="GeneID" id="72429837"/>
<dbReference type="KEGG" id="syf:Synpcc7942_0984"/>
<dbReference type="eggNOG" id="COG1381">
    <property type="taxonomic scope" value="Bacteria"/>
</dbReference>
<dbReference type="HOGENOM" id="CLU_066632_0_0_3"/>
<dbReference type="OrthoDB" id="9797083at2"/>
<dbReference type="BioCyc" id="SYNEL:SYNPCC7942_0984-MONOMER"/>
<dbReference type="Proteomes" id="UP000889800">
    <property type="component" value="Chromosome"/>
</dbReference>
<dbReference type="GO" id="GO:0043590">
    <property type="term" value="C:bacterial nucleoid"/>
    <property type="evidence" value="ECO:0007669"/>
    <property type="project" value="TreeGrafter"/>
</dbReference>
<dbReference type="GO" id="GO:0006310">
    <property type="term" value="P:DNA recombination"/>
    <property type="evidence" value="ECO:0007669"/>
    <property type="project" value="UniProtKB-UniRule"/>
</dbReference>
<dbReference type="GO" id="GO:0006302">
    <property type="term" value="P:double-strand break repair"/>
    <property type="evidence" value="ECO:0007669"/>
    <property type="project" value="TreeGrafter"/>
</dbReference>
<dbReference type="Gene3D" id="2.40.50.140">
    <property type="entry name" value="Nucleic acid-binding proteins"/>
    <property type="match status" value="1"/>
</dbReference>
<dbReference type="Gene3D" id="1.20.1440.120">
    <property type="entry name" value="Recombination protein O, C-terminal domain"/>
    <property type="match status" value="1"/>
</dbReference>
<dbReference type="HAMAP" id="MF_00201">
    <property type="entry name" value="RecO"/>
    <property type="match status" value="1"/>
</dbReference>
<dbReference type="InterPro" id="IPR037278">
    <property type="entry name" value="ARFGAP/RecO"/>
</dbReference>
<dbReference type="InterPro" id="IPR022572">
    <property type="entry name" value="DNA_rep/recomb_RecO_N"/>
</dbReference>
<dbReference type="InterPro" id="IPR012340">
    <property type="entry name" value="NA-bd_OB-fold"/>
</dbReference>
<dbReference type="InterPro" id="IPR003717">
    <property type="entry name" value="RecO"/>
</dbReference>
<dbReference type="InterPro" id="IPR042242">
    <property type="entry name" value="RecO_C"/>
</dbReference>
<dbReference type="NCBIfam" id="TIGR00613">
    <property type="entry name" value="reco"/>
    <property type="match status" value="1"/>
</dbReference>
<dbReference type="PANTHER" id="PTHR33991">
    <property type="entry name" value="DNA REPAIR PROTEIN RECO"/>
    <property type="match status" value="1"/>
</dbReference>
<dbReference type="PANTHER" id="PTHR33991:SF1">
    <property type="entry name" value="DNA REPAIR PROTEIN RECO"/>
    <property type="match status" value="1"/>
</dbReference>
<dbReference type="Pfam" id="PF02565">
    <property type="entry name" value="RecO_C"/>
    <property type="match status" value="1"/>
</dbReference>
<dbReference type="Pfam" id="PF11967">
    <property type="entry name" value="RecO_N"/>
    <property type="match status" value="1"/>
</dbReference>
<dbReference type="SUPFAM" id="SSF57863">
    <property type="entry name" value="ArfGap/RecO-like zinc finger"/>
    <property type="match status" value="1"/>
</dbReference>
<dbReference type="SUPFAM" id="SSF50249">
    <property type="entry name" value="Nucleic acid-binding proteins"/>
    <property type="match status" value="1"/>
</dbReference>
<sequence>MSRTYTTTAIVLKATPLGEADRLLTLLSPDQGLLRVVATGARKPRSKLGGRTALFVVGDCLIACGKSLDRLQQVETLTSHTALSGDLARLAAAQYLTELVLAQALERHPQPELFALLCRDLARIETQSGLEVLPYLLQSTWQLLAWAGWAPQTHYCCLTQQAVQPRLEQSRWRVRYSPSLGGVLADTAAYQRRPNQRELLLTATELAALQQIPTSQTVLPLASLPREAWQMLERALRHSAEYHLERPLQSALLLETLLTGSHVASV</sequence>
<reference key="1">
    <citation type="submission" date="2005-08" db="EMBL/GenBank/DDBJ databases">
        <title>Complete sequence of chromosome 1 of Synechococcus elongatus PCC 7942.</title>
        <authorList>
            <consortium name="US DOE Joint Genome Institute"/>
            <person name="Copeland A."/>
            <person name="Lucas S."/>
            <person name="Lapidus A."/>
            <person name="Barry K."/>
            <person name="Detter J.C."/>
            <person name="Glavina T."/>
            <person name="Hammon N."/>
            <person name="Israni S."/>
            <person name="Pitluck S."/>
            <person name="Schmutz J."/>
            <person name="Larimer F."/>
            <person name="Land M."/>
            <person name="Kyrpides N."/>
            <person name="Lykidis A."/>
            <person name="Golden S."/>
            <person name="Richardson P."/>
        </authorList>
    </citation>
    <scope>NUCLEOTIDE SEQUENCE [LARGE SCALE GENOMIC DNA]</scope>
    <source>
        <strain>ATCC 33912 / PCC 7942 / FACHB-805</strain>
    </source>
</reference>
<organism>
    <name type="scientific">Synechococcus elongatus (strain ATCC 33912 / PCC 7942 / FACHB-805)</name>
    <name type="common">Anacystis nidulans R2</name>
    <dbReference type="NCBI Taxonomy" id="1140"/>
    <lineage>
        <taxon>Bacteria</taxon>
        <taxon>Bacillati</taxon>
        <taxon>Cyanobacteriota</taxon>
        <taxon>Cyanophyceae</taxon>
        <taxon>Synechococcales</taxon>
        <taxon>Synechococcaceae</taxon>
        <taxon>Synechococcus</taxon>
    </lineage>
</organism>
<evidence type="ECO:0000255" key="1">
    <source>
        <dbReference type="HAMAP-Rule" id="MF_00201"/>
    </source>
</evidence>
<comment type="function">
    <text evidence="1">Involved in DNA repair and RecF pathway recombination.</text>
</comment>
<comment type="similarity">
    <text evidence="1">Belongs to the RecO family.</text>
</comment>
<gene>
    <name evidence="1" type="primary">recO</name>
    <name type="ordered locus">Synpcc7942_0984</name>
</gene>
<feature type="chain" id="PRO_1000099421" description="DNA repair protein RecO">
    <location>
        <begin position="1"/>
        <end position="266"/>
    </location>
</feature>
<protein>
    <recommendedName>
        <fullName evidence="1">DNA repair protein RecO</fullName>
    </recommendedName>
    <alternativeName>
        <fullName evidence="1">Recombination protein O</fullName>
    </alternativeName>
</protein>
<name>RECO_SYNE7</name>